<accession>P21879</accession>
<keyword id="KW-0002">3D-structure</keyword>
<keyword id="KW-0129">CBS domain</keyword>
<keyword id="KW-0903">Direct protein sequencing</keyword>
<keyword id="KW-0332">GMP biosynthesis</keyword>
<keyword id="KW-0479">Metal-binding</keyword>
<keyword id="KW-0520">NAD</keyword>
<keyword id="KW-0560">Oxidoreductase</keyword>
<keyword id="KW-0630">Potassium</keyword>
<keyword id="KW-0658">Purine biosynthesis</keyword>
<keyword id="KW-1185">Reference proteome</keyword>
<keyword id="KW-0677">Repeat</keyword>
<protein>
    <recommendedName>
        <fullName evidence="1">Inosine-5'-monophosphate dehydrogenase</fullName>
        <shortName evidence="1">IMP dehydrogenase</shortName>
        <shortName evidence="1">IMPD</shortName>
        <shortName evidence="1">IMPDH</shortName>
        <ecNumber evidence="1">1.1.1.205</ecNumber>
    </recommendedName>
    <alternativeName>
        <fullName>Superoxide-inducible protein 12</fullName>
        <shortName>SOI12</shortName>
    </alternativeName>
</protein>
<dbReference type="EC" id="1.1.1.205" evidence="1"/>
<dbReference type="EMBL" id="X55669">
    <property type="protein sequence ID" value="CAA39204.1"/>
    <property type="molecule type" value="Genomic_DNA"/>
</dbReference>
<dbReference type="EMBL" id="D26185">
    <property type="protein sequence ID" value="BAA05245.1"/>
    <property type="molecule type" value="Genomic_DNA"/>
</dbReference>
<dbReference type="EMBL" id="AL009126">
    <property type="protein sequence ID" value="CAB11785.1"/>
    <property type="molecule type" value="Genomic_DNA"/>
</dbReference>
<dbReference type="PIR" id="S66039">
    <property type="entry name" value="DEBSMP"/>
</dbReference>
<dbReference type="RefSeq" id="NP_387890.1">
    <property type="nucleotide sequence ID" value="NC_000964.3"/>
</dbReference>
<dbReference type="RefSeq" id="WP_003226803.1">
    <property type="nucleotide sequence ID" value="NZ_OZ025638.1"/>
</dbReference>
<dbReference type="PDB" id="7OJ1">
    <property type="method" value="X-ray"/>
    <property type="resolution" value="2.44 A"/>
    <property type="chains" value="A/B=2-466"/>
</dbReference>
<dbReference type="PDB" id="7OJ2">
    <property type="method" value="X-ray"/>
    <property type="resolution" value="1.76 A"/>
    <property type="chains" value="A=2-94, A=209-488"/>
</dbReference>
<dbReference type="PDBsum" id="7OJ1"/>
<dbReference type="PDBsum" id="7OJ2"/>
<dbReference type="SMR" id="P21879"/>
<dbReference type="FunCoup" id="P21879">
    <property type="interactions" value="531"/>
</dbReference>
<dbReference type="IntAct" id="P21879">
    <property type="interactions" value="1"/>
</dbReference>
<dbReference type="MINT" id="P21879"/>
<dbReference type="STRING" id="224308.BSU00090"/>
<dbReference type="jPOST" id="P21879"/>
<dbReference type="PaxDb" id="224308-BSU00090"/>
<dbReference type="EnsemblBacteria" id="CAB11785">
    <property type="protein sequence ID" value="CAB11785"/>
    <property type="gene ID" value="BSU_00090"/>
</dbReference>
<dbReference type="GeneID" id="86871237"/>
<dbReference type="GeneID" id="938032"/>
<dbReference type="KEGG" id="bsu:BSU00090"/>
<dbReference type="PATRIC" id="fig|224308.179.peg.9"/>
<dbReference type="eggNOG" id="COG0516">
    <property type="taxonomic scope" value="Bacteria"/>
</dbReference>
<dbReference type="eggNOG" id="COG0517">
    <property type="taxonomic scope" value="Bacteria"/>
</dbReference>
<dbReference type="InParanoid" id="P21879"/>
<dbReference type="OrthoDB" id="9805398at2"/>
<dbReference type="PhylomeDB" id="P21879"/>
<dbReference type="BioCyc" id="BSUB:BSU00090-MONOMER"/>
<dbReference type="UniPathway" id="UPA00601">
    <property type="reaction ID" value="UER00295"/>
</dbReference>
<dbReference type="Proteomes" id="UP000001570">
    <property type="component" value="Chromosome"/>
</dbReference>
<dbReference type="GO" id="GO:0003938">
    <property type="term" value="F:IMP dehydrogenase activity"/>
    <property type="evidence" value="ECO:0000318"/>
    <property type="project" value="GO_Central"/>
</dbReference>
<dbReference type="GO" id="GO:0046872">
    <property type="term" value="F:metal ion binding"/>
    <property type="evidence" value="ECO:0007669"/>
    <property type="project" value="UniProtKB-UniRule"/>
</dbReference>
<dbReference type="GO" id="GO:0000166">
    <property type="term" value="F:nucleotide binding"/>
    <property type="evidence" value="ECO:0007669"/>
    <property type="project" value="UniProtKB-UniRule"/>
</dbReference>
<dbReference type="GO" id="GO:0006177">
    <property type="term" value="P:GMP biosynthetic process"/>
    <property type="evidence" value="ECO:0007669"/>
    <property type="project" value="UniProtKB-UniRule"/>
</dbReference>
<dbReference type="GO" id="GO:0006183">
    <property type="term" value="P:GTP biosynthetic process"/>
    <property type="evidence" value="ECO:0000318"/>
    <property type="project" value="GO_Central"/>
</dbReference>
<dbReference type="CDD" id="cd04601">
    <property type="entry name" value="CBS_pair_IMPDH"/>
    <property type="match status" value="1"/>
</dbReference>
<dbReference type="CDD" id="cd00381">
    <property type="entry name" value="IMPDH"/>
    <property type="match status" value="1"/>
</dbReference>
<dbReference type="FunFam" id="3.20.20.70:FF:000003">
    <property type="entry name" value="GMP reductase"/>
    <property type="match status" value="1"/>
</dbReference>
<dbReference type="Gene3D" id="3.20.20.70">
    <property type="entry name" value="Aldolase class I"/>
    <property type="match status" value="1"/>
</dbReference>
<dbReference type="HAMAP" id="MF_01964">
    <property type="entry name" value="IMPDH"/>
    <property type="match status" value="1"/>
</dbReference>
<dbReference type="InterPro" id="IPR013785">
    <property type="entry name" value="Aldolase_TIM"/>
</dbReference>
<dbReference type="InterPro" id="IPR000644">
    <property type="entry name" value="CBS_dom"/>
</dbReference>
<dbReference type="InterPro" id="IPR046342">
    <property type="entry name" value="CBS_dom_sf"/>
</dbReference>
<dbReference type="InterPro" id="IPR005990">
    <property type="entry name" value="IMP_DH"/>
</dbReference>
<dbReference type="InterPro" id="IPR015875">
    <property type="entry name" value="IMP_DH/GMP_Rdtase_CS"/>
</dbReference>
<dbReference type="InterPro" id="IPR001093">
    <property type="entry name" value="IMP_DH_GMPRt"/>
</dbReference>
<dbReference type="NCBIfam" id="TIGR01302">
    <property type="entry name" value="IMP_dehydrog"/>
    <property type="match status" value="1"/>
</dbReference>
<dbReference type="PANTHER" id="PTHR11911:SF111">
    <property type="entry name" value="INOSINE-5'-MONOPHOSPHATE DEHYDROGENASE"/>
    <property type="match status" value="1"/>
</dbReference>
<dbReference type="PANTHER" id="PTHR11911">
    <property type="entry name" value="INOSINE-5-MONOPHOSPHATE DEHYDROGENASE RELATED"/>
    <property type="match status" value="1"/>
</dbReference>
<dbReference type="Pfam" id="PF00571">
    <property type="entry name" value="CBS"/>
    <property type="match status" value="2"/>
</dbReference>
<dbReference type="Pfam" id="PF00478">
    <property type="entry name" value="IMPDH"/>
    <property type="match status" value="1"/>
</dbReference>
<dbReference type="PIRSF" id="PIRSF000130">
    <property type="entry name" value="IMPDH"/>
    <property type="match status" value="1"/>
</dbReference>
<dbReference type="SMART" id="SM00116">
    <property type="entry name" value="CBS"/>
    <property type="match status" value="2"/>
</dbReference>
<dbReference type="SMART" id="SM01240">
    <property type="entry name" value="IMPDH"/>
    <property type="match status" value="1"/>
</dbReference>
<dbReference type="SUPFAM" id="SSF54631">
    <property type="entry name" value="CBS-domain pair"/>
    <property type="match status" value="1"/>
</dbReference>
<dbReference type="SUPFAM" id="SSF51412">
    <property type="entry name" value="Inosine monophosphate dehydrogenase (IMPDH)"/>
    <property type="match status" value="1"/>
</dbReference>
<dbReference type="PROSITE" id="PS51371">
    <property type="entry name" value="CBS"/>
    <property type="match status" value="2"/>
</dbReference>
<dbReference type="PROSITE" id="PS00487">
    <property type="entry name" value="IMP_DH_GMP_RED"/>
    <property type="match status" value="1"/>
</dbReference>
<feature type="chain" id="PRO_0000093691" description="Inosine-5'-monophosphate dehydrogenase">
    <location>
        <begin position="1"/>
        <end position="488"/>
    </location>
</feature>
<feature type="domain" description="CBS 1" evidence="1">
    <location>
        <begin position="95"/>
        <end position="153"/>
    </location>
</feature>
<feature type="domain" description="CBS 2" evidence="1">
    <location>
        <begin position="157"/>
        <end position="214"/>
    </location>
</feature>
<feature type="active site" description="Thioimidate intermediate" evidence="1">
    <location>
        <position position="308"/>
    </location>
</feature>
<feature type="active site" description="Proton acceptor" evidence="1">
    <location>
        <position position="404"/>
    </location>
</feature>
<feature type="binding site" evidence="1">
    <location>
        <position position="251"/>
    </location>
    <ligand>
        <name>NAD(+)</name>
        <dbReference type="ChEBI" id="CHEBI:57540"/>
    </ligand>
</feature>
<feature type="binding site" evidence="1">
    <location>
        <begin position="301"/>
        <end position="303"/>
    </location>
    <ligand>
        <name>NAD(+)</name>
        <dbReference type="ChEBI" id="CHEBI:57540"/>
    </ligand>
</feature>
<feature type="binding site" description="in other chain" evidence="1">
    <location>
        <position position="303"/>
    </location>
    <ligand>
        <name>K(+)</name>
        <dbReference type="ChEBI" id="CHEBI:29103"/>
        <note>ligand shared between two tetrameric partners</note>
    </ligand>
</feature>
<feature type="binding site" description="in other chain" evidence="1">
    <location>
        <position position="305"/>
    </location>
    <ligand>
        <name>K(+)</name>
        <dbReference type="ChEBI" id="CHEBI:29103"/>
        <note>ligand shared between two tetrameric partners</note>
    </ligand>
</feature>
<feature type="binding site" evidence="1">
    <location>
        <position position="306"/>
    </location>
    <ligand>
        <name>IMP</name>
        <dbReference type="ChEBI" id="CHEBI:58053"/>
    </ligand>
</feature>
<feature type="binding site" description="in other chain" evidence="1">
    <location>
        <position position="308"/>
    </location>
    <ligand>
        <name>K(+)</name>
        <dbReference type="ChEBI" id="CHEBI:29103"/>
        <note>ligand shared between two tetrameric partners</note>
    </ligand>
</feature>
<feature type="binding site" evidence="1">
    <location>
        <begin position="341"/>
        <end position="343"/>
    </location>
    <ligand>
        <name>IMP</name>
        <dbReference type="ChEBI" id="CHEBI:58053"/>
    </ligand>
</feature>
<feature type="binding site" evidence="1">
    <location>
        <begin position="364"/>
        <end position="365"/>
    </location>
    <ligand>
        <name>IMP</name>
        <dbReference type="ChEBI" id="CHEBI:58053"/>
    </ligand>
</feature>
<feature type="binding site" evidence="1">
    <location>
        <begin position="388"/>
        <end position="392"/>
    </location>
    <ligand>
        <name>IMP</name>
        <dbReference type="ChEBI" id="CHEBI:58053"/>
    </ligand>
</feature>
<feature type="binding site" evidence="1">
    <location>
        <position position="416"/>
    </location>
    <ligand>
        <name>IMP</name>
        <dbReference type="ChEBI" id="CHEBI:58053"/>
    </ligand>
</feature>
<feature type="binding site" evidence="1">
    <location>
        <position position="470"/>
    </location>
    <ligand>
        <name>K(+)</name>
        <dbReference type="ChEBI" id="CHEBI:29103"/>
        <note>ligand shared between two tetrameric partners</note>
    </ligand>
</feature>
<feature type="binding site" evidence="1">
    <location>
        <position position="471"/>
    </location>
    <ligand>
        <name>K(+)</name>
        <dbReference type="ChEBI" id="CHEBI:29103"/>
        <note>ligand shared between two tetrameric partners</note>
    </ligand>
</feature>
<feature type="binding site" evidence="1">
    <location>
        <position position="472"/>
    </location>
    <ligand>
        <name>K(+)</name>
        <dbReference type="ChEBI" id="CHEBI:29103"/>
        <note>ligand shared between two tetrameric partners</note>
    </ligand>
</feature>
<feature type="sequence conflict" description="In Ref. 1; CAA39204." evidence="2" ref="1">
    <original>R</original>
    <variation>H</variation>
    <location>
        <position position="28"/>
    </location>
</feature>
<feature type="sequence conflict" description="In Ref. 1; CAA39204." evidence="2" ref="1">
    <original>KESPNYTIS</original>
    <variation>VHRNKALPGLFGSHQKKTGFVYDECCQSGFFSSD</variation>
    <location>
        <begin position="480"/>
        <end position="488"/>
    </location>
</feature>
<feature type="turn" evidence="4">
    <location>
        <begin position="3"/>
        <end position="6"/>
    </location>
</feature>
<feature type="helix" evidence="4">
    <location>
        <begin position="13"/>
        <end position="15"/>
    </location>
</feature>
<feature type="strand" evidence="4">
    <location>
        <begin position="16"/>
        <end position="18"/>
    </location>
</feature>
<feature type="helix" evidence="4">
    <location>
        <begin position="27"/>
        <end position="29"/>
    </location>
</feature>
<feature type="strand" evidence="4">
    <location>
        <begin position="34"/>
        <end position="37"/>
    </location>
</feature>
<feature type="strand" evidence="4">
    <location>
        <begin position="40"/>
        <end position="48"/>
    </location>
</feature>
<feature type="turn" evidence="4">
    <location>
        <begin position="52"/>
        <end position="54"/>
    </location>
</feature>
<feature type="helix" evidence="4">
    <location>
        <begin position="57"/>
        <end position="65"/>
    </location>
</feature>
<feature type="strand" evidence="4">
    <location>
        <begin position="69"/>
        <end position="72"/>
    </location>
</feature>
<feature type="strand" evidence="4">
    <location>
        <begin position="74"/>
        <end position="76"/>
    </location>
</feature>
<feature type="helix" evidence="4">
    <location>
        <begin position="78"/>
        <end position="89"/>
    </location>
</feature>
<feature type="turn" evidence="3">
    <location>
        <begin position="90"/>
        <end position="92"/>
    </location>
</feature>
<feature type="helix" evidence="3">
    <location>
        <begin position="108"/>
        <end position="116"/>
    </location>
</feature>
<feature type="strand" evidence="3">
    <location>
        <begin position="122"/>
        <end position="125"/>
    </location>
</feature>
<feature type="strand" evidence="3">
    <location>
        <begin position="129"/>
        <end position="131"/>
    </location>
</feature>
<feature type="strand" evidence="3">
    <location>
        <begin position="136"/>
        <end position="139"/>
    </location>
</feature>
<feature type="helix" evidence="3">
    <location>
        <begin position="140"/>
        <end position="144"/>
    </location>
</feature>
<feature type="helix" evidence="3">
    <location>
        <begin position="153"/>
        <end position="155"/>
    </location>
</feature>
<feature type="strand" evidence="3">
    <location>
        <begin position="156"/>
        <end position="158"/>
    </location>
</feature>
<feature type="strand" evidence="3">
    <location>
        <begin position="171"/>
        <end position="176"/>
    </location>
</feature>
<feature type="helix" evidence="3">
    <location>
        <begin position="177"/>
        <end position="181"/>
    </location>
</feature>
<feature type="strand" evidence="3">
    <location>
        <begin position="186"/>
        <end position="189"/>
    </location>
</feature>
<feature type="strand" evidence="3">
    <location>
        <begin position="194"/>
        <end position="200"/>
    </location>
</feature>
<feature type="helix" evidence="3">
    <location>
        <begin position="202"/>
        <end position="205"/>
    </location>
</feature>
<feature type="turn" evidence="3">
    <location>
        <begin position="206"/>
        <end position="208"/>
    </location>
</feature>
<feature type="strand" evidence="4">
    <location>
        <begin position="224"/>
        <end position="227"/>
    </location>
</feature>
<feature type="strand" evidence="3">
    <location>
        <begin position="229"/>
        <end position="232"/>
    </location>
</feature>
<feature type="helix" evidence="4">
    <location>
        <begin position="233"/>
        <end position="242"/>
    </location>
</feature>
<feature type="strand" evidence="4">
    <location>
        <begin position="246"/>
        <end position="251"/>
    </location>
</feature>
<feature type="strand" evidence="4">
    <location>
        <begin position="255"/>
        <end position="257"/>
    </location>
</feature>
<feature type="helix" evidence="4">
    <location>
        <begin position="258"/>
        <end position="270"/>
    </location>
</feature>
<feature type="strand" evidence="4">
    <location>
        <begin position="275"/>
        <end position="281"/>
    </location>
</feature>
<feature type="helix" evidence="4">
    <location>
        <begin position="284"/>
        <end position="293"/>
    </location>
</feature>
<feature type="strand" evidence="4">
    <location>
        <begin position="296"/>
        <end position="300"/>
    </location>
</feature>
<feature type="helix" evidence="4">
    <location>
        <begin position="310"/>
        <end position="313"/>
    </location>
</feature>
<feature type="helix" evidence="4">
    <location>
        <begin position="320"/>
        <end position="333"/>
    </location>
</feature>
<feature type="strand" evidence="4">
    <location>
        <begin position="337"/>
        <end position="342"/>
    </location>
</feature>
<feature type="helix" evidence="4">
    <location>
        <begin position="347"/>
        <end position="355"/>
    </location>
</feature>
<feature type="strand" evidence="4">
    <location>
        <begin position="359"/>
        <end position="364"/>
    </location>
</feature>
<feature type="helix" evidence="4">
    <location>
        <begin position="365"/>
        <end position="368"/>
    </location>
</feature>
<feature type="strand" evidence="3">
    <location>
        <begin position="373"/>
        <end position="375"/>
    </location>
</feature>
<feature type="strand" evidence="4">
    <location>
        <begin position="377"/>
        <end position="380"/>
    </location>
</feature>
<feature type="strand" evidence="4">
    <location>
        <begin position="383"/>
        <end position="389"/>
    </location>
</feature>
<feature type="turn" evidence="4">
    <location>
        <begin position="394"/>
        <end position="396"/>
    </location>
</feature>
<feature type="strand" evidence="4">
    <location>
        <begin position="419"/>
        <end position="423"/>
    </location>
</feature>
<feature type="helix" evidence="4">
    <location>
        <begin position="428"/>
        <end position="446"/>
    </location>
</feature>
<feature type="helix" evidence="4">
    <location>
        <begin position="451"/>
        <end position="457"/>
    </location>
</feature>
<feature type="strand" evidence="4">
    <location>
        <begin position="460"/>
        <end position="462"/>
    </location>
</feature>
<feature type="helix" evidence="4">
    <location>
        <begin position="465"/>
        <end position="471"/>
    </location>
</feature>
<evidence type="ECO:0000255" key="1">
    <source>
        <dbReference type="HAMAP-Rule" id="MF_01964"/>
    </source>
</evidence>
<evidence type="ECO:0000305" key="2"/>
<evidence type="ECO:0007829" key="3">
    <source>
        <dbReference type="PDB" id="7OJ1"/>
    </source>
</evidence>
<evidence type="ECO:0007829" key="4">
    <source>
        <dbReference type="PDB" id="7OJ2"/>
    </source>
</evidence>
<sequence length="488" mass="52991">MWESKFSKEGLTFDDVLLVPAKSEVLPRDVDLSVELTKTLKLNIPVISAGMDTVTESAMAIAMARQGGLGIIHKNMSIEQQAEQVDKVKRSERGVITNPFFLTPDHQVFDAEHLMGKYRISGVPIVNNEEDQKLVGIITNRDLRFISDYSMKISDVMTKEELVTASVGTTLDEAEKILQKHKIEKLPLVDDQNKLKGLITIKDIEKVIEFPNSSKDIHGRLIVGAAVGVTGDTMTRVKKLVEANVDVIVIDTAHGHSQGVLNTVTKIRETYPELNIIAGNVATAEATRALIEAGADVVKVGIGPGSICTTRVVAGVGVPQITAIYDCATEARKHGKTIIADGGIKFSGDITKALAAGGHAVMLGSLLAGTSESPGETEIYQGRRFKVYRGMGSVAAMEKGSKDRYFQEENKKFVPEGIEGRTPYKGPVEETVYQLVGGLRSGMGYCGSKDLRALREEAQFIRMTGAGLRESHPHDVQITKESPNYTIS</sequence>
<proteinExistence type="evidence at protein level"/>
<organism>
    <name type="scientific">Bacillus subtilis (strain 168)</name>
    <dbReference type="NCBI Taxonomy" id="224308"/>
    <lineage>
        <taxon>Bacteria</taxon>
        <taxon>Bacillati</taxon>
        <taxon>Bacillota</taxon>
        <taxon>Bacilli</taxon>
        <taxon>Bacillales</taxon>
        <taxon>Bacillaceae</taxon>
        <taxon>Bacillus</taxon>
    </lineage>
</organism>
<gene>
    <name evidence="1" type="primary">guaB</name>
    <name type="synonym">gnaB</name>
    <name type="ordered locus">BSU00090</name>
</gene>
<name>IMDH_BACSU</name>
<comment type="function">
    <text evidence="1">Catalyzes the conversion of inosine 5'-phosphate (IMP) to xanthosine 5'-phosphate (XMP), the first committed and rate-limiting step in the de novo synthesis of guanine nucleotides, and therefore plays an important role in the regulation of cell growth.</text>
</comment>
<comment type="catalytic activity">
    <reaction evidence="1">
        <text>IMP + NAD(+) + H2O = XMP + NADH + H(+)</text>
        <dbReference type="Rhea" id="RHEA:11708"/>
        <dbReference type="ChEBI" id="CHEBI:15377"/>
        <dbReference type="ChEBI" id="CHEBI:15378"/>
        <dbReference type="ChEBI" id="CHEBI:57464"/>
        <dbReference type="ChEBI" id="CHEBI:57540"/>
        <dbReference type="ChEBI" id="CHEBI:57945"/>
        <dbReference type="ChEBI" id="CHEBI:58053"/>
        <dbReference type="EC" id="1.1.1.205"/>
    </reaction>
</comment>
<comment type="cofactor">
    <cofactor evidence="1">
        <name>K(+)</name>
        <dbReference type="ChEBI" id="CHEBI:29103"/>
    </cofactor>
</comment>
<comment type="activity regulation">
    <text evidence="1">Mycophenolic acid (MPA) is a non-competitive inhibitor that prevents formation of the closed enzyme conformation by binding to the same site as the amobile flap. In contrast, mizoribine monophosphate (MZP) is a competitive inhibitor that induces the closed conformation. MPA is a potent inhibitor of mammalian IMPDHs but a poor inhibitor of the bacterial enzymes. MZP is a more potent inhibitor of bacterial IMPDH.</text>
</comment>
<comment type="pathway">
    <text evidence="1">Purine metabolism; XMP biosynthesis via de novo pathway; XMP from IMP: step 1/1.</text>
</comment>
<comment type="subunit">
    <text evidence="1">Homotetramer.</text>
</comment>
<comment type="induction">
    <text>By superoxide.</text>
</comment>
<comment type="similarity">
    <text evidence="1">Belongs to the IMPDH/GMPR family.</text>
</comment>
<reference key="1">
    <citation type="journal article" date="1990" name="Nucleic Acids Res.">
        <title>Nucleotide sequence of the Bacillus subtilis IMP dehydrogenase gene.</title>
        <authorList>
            <person name="Kanzaki N."/>
            <person name="Miyagawa K.I."/>
        </authorList>
    </citation>
    <scope>NUCLEOTIDE SEQUENCE [GENOMIC DNA]</scope>
</reference>
<reference key="2">
    <citation type="journal article" date="1994" name="DNA Res.">
        <title>Systematic sequencing of the 180 kilobase region of the Bacillus subtilis chromosome containing the replication origin.</title>
        <authorList>
            <person name="Ogasawara N."/>
            <person name="Nakai S."/>
            <person name="Yoshikawa H."/>
        </authorList>
    </citation>
    <scope>NUCLEOTIDE SEQUENCE [GENOMIC DNA]</scope>
    <source>
        <strain>168</strain>
    </source>
</reference>
<reference key="3">
    <citation type="journal article" date="1997" name="Nature">
        <title>The complete genome sequence of the Gram-positive bacterium Bacillus subtilis.</title>
        <authorList>
            <person name="Kunst F."/>
            <person name="Ogasawara N."/>
            <person name="Moszer I."/>
            <person name="Albertini A.M."/>
            <person name="Alloni G."/>
            <person name="Azevedo V."/>
            <person name="Bertero M.G."/>
            <person name="Bessieres P."/>
            <person name="Bolotin A."/>
            <person name="Borchert S."/>
            <person name="Borriss R."/>
            <person name="Boursier L."/>
            <person name="Brans A."/>
            <person name="Braun M."/>
            <person name="Brignell S.C."/>
            <person name="Bron S."/>
            <person name="Brouillet S."/>
            <person name="Bruschi C.V."/>
            <person name="Caldwell B."/>
            <person name="Capuano V."/>
            <person name="Carter N.M."/>
            <person name="Choi S.-K."/>
            <person name="Codani J.-J."/>
            <person name="Connerton I.F."/>
            <person name="Cummings N.J."/>
            <person name="Daniel R.A."/>
            <person name="Denizot F."/>
            <person name="Devine K.M."/>
            <person name="Duesterhoeft A."/>
            <person name="Ehrlich S.D."/>
            <person name="Emmerson P.T."/>
            <person name="Entian K.-D."/>
            <person name="Errington J."/>
            <person name="Fabret C."/>
            <person name="Ferrari E."/>
            <person name="Foulger D."/>
            <person name="Fritz C."/>
            <person name="Fujita M."/>
            <person name="Fujita Y."/>
            <person name="Fuma S."/>
            <person name="Galizzi A."/>
            <person name="Galleron N."/>
            <person name="Ghim S.-Y."/>
            <person name="Glaser P."/>
            <person name="Goffeau A."/>
            <person name="Golightly E.J."/>
            <person name="Grandi G."/>
            <person name="Guiseppi G."/>
            <person name="Guy B.J."/>
            <person name="Haga K."/>
            <person name="Haiech J."/>
            <person name="Harwood C.R."/>
            <person name="Henaut A."/>
            <person name="Hilbert H."/>
            <person name="Holsappel S."/>
            <person name="Hosono S."/>
            <person name="Hullo M.-F."/>
            <person name="Itaya M."/>
            <person name="Jones L.-M."/>
            <person name="Joris B."/>
            <person name="Karamata D."/>
            <person name="Kasahara Y."/>
            <person name="Klaerr-Blanchard M."/>
            <person name="Klein C."/>
            <person name="Kobayashi Y."/>
            <person name="Koetter P."/>
            <person name="Koningstein G."/>
            <person name="Krogh S."/>
            <person name="Kumano M."/>
            <person name="Kurita K."/>
            <person name="Lapidus A."/>
            <person name="Lardinois S."/>
            <person name="Lauber J."/>
            <person name="Lazarevic V."/>
            <person name="Lee S.-M."/>
            <person name="Levine A."/>
            <person name="Liu H."/>
            <person name="Masuda S."/>
            <person name="Mauel C."/>
            <person name="Medigue C."/>
            <person name="Medina N."/>
            <person name="Mellado R.P."/>
            <person name="Mizuno M."/>
            <person name="Moestl D."/>
            <person name="Nakai S."/>
            <person name="Noback M."/>
            <person name="Noone D."/>
            <person name="O'Reilly M."/>
            <person name="Ogawa K."/>
            <person name="Ogiwara A."/>
            <person name="Oudega B."/>
            <person name="Park S.-H."/>
            <person name="Parro V."/>
            <person name="Pohl T.M."/>
            <person name="Portetelle D."/>
            <person name="Porwollik S."/>
            <person name="Prescott A.M."/>
            <person name="Presecan E."/>
            <person name="Pujic P."/>
            <person name="Purnelle B."/>
            <person name="Rapoport G."/>
            <person name="Rey M."/>
            <person name="Reynolds S."/>
            <person name="Rieger M."/>
            <person name="Rivolta C."/>
            <person name="Rocha E."/>
            <person name="Roche B."/>
            <person name="Rose M."/>
            <person name="Sadaie Y."/>
            <person name="Sato T."/>
            <person name="Scanlan E."/>
            <person name="Schleich S."/>
            <person name="Schroeter R."/>
            <person name="Scoffone F."/>
            <person name="Sekiguchi J."/>
            <person name="Sekowska A."/>
            <person name="Seror S.J."/>
            <person name="Serror P."/>
            <person name="Shin B.-S."/>
            <person name="Soldo B."/>
            <person name="Sorokin A."/>
            <person name="Tacconi E."/>
            <person name="Takagi T."/>
            <person name="Takahashi H."/>
            <person name="Takemaru K."/>
            <person name="Takeuchi M."/>
            <person name="Tamakoshi A."/>
            <person name="Tanaka T."/>
            <person name="Terpstra P."/>
            <person name="Tognoni A."/>
            <person name="Tosato V."/>
            <person name="Uchiyama S."/>
            <person name="Vandenbol M."/>
            <person name="Vannier F."/>
            <person name="Vassarotti A."/>
            <person name="Viari A."/>
            <person name="Wambutt R."/>
            <person name="Wedler E."/>
            <person name="Wedler H."/>
            <person name="Weitzenegger T."/>
            <person name="Winters P."/>
            <person name="Wipat A."/>
            <person name="Yamamoto H."/>
            <person name="Yamane K."/>
            <person name="Yasumoto K."/>
            <person name="Yata K."/>
            <person name="Yoshida K."/>
            <person name="Yoshikawa H.-F."/>
            <person name="Zumstein E."/>
            <person name="Yoshikawa H."/>
            <person name="Danchin A."/>
        </authorList>
    </citation>
    <scope>NUCLEOTIDE SEQUENCE [LARGE SCALE GENOMIC DNA]</scope>
    <source>
        <strain>168</strain>
    </source>
</reference>
<reference key="4">
    <citation type="journal article" date="1997" name="Electrophoresis">
        <title>First steps from a two-dimensional protein index towards a response-regulation map for Bacillus subtilis.</title>
        <authorList>
            <person name="Antelmann H."/>
            <person name="Bernhardt J."/>
            <person name="Schmid R."/>
            <person name="Mach H."/>
            <person name="Voelker U."/>
            <person name="Hecker M."/>
        </authorList>
    </citation>
    <scope>PROTEIN SEQUENCE OF 1-25</scope>
    <source>
        <strain>168 / IS58</strain>
    </source>
</reference>